<keyword id="KW-0091">Biomineralization</keyword>
<keyword id="KW-0997">Cell inner membrane</keyword>
<keyword id="KW-1003">Cell membrane</keyword>
<keyword id="KW-1281">Magnetosome</keyword>
<keyword id="KW-0472">Membrane</keyword>
<keyword id="KW-1185">Reference proteome</keyword>
<keyword id="KW-0812">Transmembrane</keyword>
<keyword id="KW-1133">Transmembrane helix</keyword>
<protein>
    <recommendedName>
        <fullName evidence="8">Magnetosome protein MamQ</fullName>
    </recommendedName>
</protein>
<organism>
    <name type="scientific">Magnetospirillum gryphiswaldense (strain DSM 6361 / JCM 21280 / NBRC 15271 / MSR-1)</name>
    <dbReference type="NCBI Taxonomy" id="431944"/>
    <lineage>
        <taxon>Bacteria</taxon>
        <taxon>Pseudomonadati</taxon>
        <taxon>Pseudomonadota</taxon>
        <taxon>Alphaproteobacteria</taxon>
        <taxon>Rhodospirillales</taxon>
        <taxon>Rhodospirillaceae</taxon>
        <taxon>Magnetospirillum</taxon>
    </lineage>
</organism>
<comment type="function">
    <text evidence="2 6">Essential for magnetosome formation (PubMed:13129949). Not essential for formation of magnetosome membrane vesicles. One of 7 genes (mamLQBIEMO) able to induce magnetosome membrane biogenesis; coexpression of mamLQRBIEMO in a deletion of the 17 gene mamAB operon restores magnetosome vesicle formation but not magnetite biosynthesis (PubMed:27286560).</text>
</comment>
<comment type="subcellular location">
    <subcellularLocation>
        <location evidence="3 6">Magnetosome membrane</location>
        <topology evidence="1">Single-pass membrane protein</topology>
    </subcellularLocation>
    <subcellularLocation>
        <location evidence="6">Cell inner membrane</location>
        <topology evidence="1">Single-pass membrane protein</topology>
    </subcellularLocation>
    <text evidence="6">Tagged protein is more abundant in cell inner membrane, is visible as puncate spots all throughout inner and magnetosome membranes.</text>
</comment>
<comment type="induction">
    <text evidence="10">Part of the probable 17 gene mamAB operon.</text>
</comment>
<comment type="disruption phenotype">
    <text evidence="2 5 6">No magnetic response, no magnetosomes, no iron crystals of any sort. MamC is mislocalized in punctate spots throughout the cell (PubMed:24816605). Magnetosome vesicles are fewer and smaller, sometimes align in a chain with the filament, only a few have very small crystals. Many other, possibly precursor magnetosome vesicles, are visible, some are attached to the cell inner membrane. MamI mislocalized to 1 to a few patches in most cells (PubMed:27286560). Deletion of approximately 80 kb of DNA, including this operon, leads to cells that are non-magnetic, lack internal membrane systems, grow poorly, have reduced mobility and take-up and accumulate iron poorly (PubMed:13129949).</text>
</comment>
<comment type="miscellaneous">
    <text evidence="9">This bacteria makes up to 60 cubo-octahedral magnetosomes of about 45 nm in diameter which contain membrane-bound crystals of magnetite (Fe(3)O(4)).</text>
</comment>
<comment type="miscellaneous">
    <text evidence="4">Expression of just the minimal mamAB gene cluster (MGMSRv2__2365 to MGMSRv2__2381), including this gene, is sufficient to form a minimal magnetosome chain with small magnetite particles.</text>
</comment>
<comment type="similarity">
    <text evidence="8">Belongs to the LemA family.</text>
</comment>
<sequence length="272" mass="30003">MAVSDADASSVDKVESITLQRVKQSEELLAQLYVVEESPRRMGRGPVQLMLAISVLSLVAFITTLLMRYNAFVTMYEDAQAKRSNFEVMIQRRDNLFGNLVKLTLNHAALEHSIFSHTSDKRKESVEAGKGGPIGSAIEQLMKQGGIGKLLGDGGAGKALLGADGGFGNALGRLMAIVEQYPTVQSADTYKHMMTSLVDMEDRIASKREEFNASAATYNVAITKWPWDYLAMITGFKRVEYFHEKPAGDTPIITPQIFQELLPLTHSQESKN</sequence>
<dbReference type="EMBL" id="AF374354">
    <property type="protein sequence ID" value="AAL09997.1"/>
    <property type="molecule type" value="Genomic_DNA"/>
</dbReference>
<dbReference type="EMBL" id="BX571797">
    <property type="protein sequence ID" value="CAE12041.1"/>
    <property type="molecule type" value="Genomic_DNA"/>
</dbReference>
<dbReference type="EMBL" id="AM085146">
    <property type="protein sequence ID" value="CAJ30125.1"/>
    <property type="molecule type" value="Genomic_DNA"/>
</dbReference>
<dbReference type="EMBL" id="CU459003">
    <property type="protein sequence ID" value="CAM78032.1"/>
    <property type="molecule type" value="Genomic_DNA"/>
</dbReference>
<dbReference type="EMBL" id="HG794546">
    <property type="protein sequence ID" value="CDK99585.1"/>
    <property type="molecule type" value="Genomic_DNA"/>
</dbReference>
<dbReference type="RefSeq" id="WP_024080581.1">
    <property type="nucleotide sequence ID" value="NZ_CP027526.1"/>
</dbReference>
<dbReference type="SMR" id="Q93DY8"/>
<dbReference type="STRING" id="1430440.MGMSRv2__2370"/>
<dbReference type="KEGG" id="mgry:MSR1_03450"/>
<dbReference type="KEGG" id="mgy:MGMSRv2__2370"/>
<dbReference type="eggNOG" id="COG1704">
    <property type="taxonomic scope" value="Bacteria"/>
</dbReference>
<dbReference type="HOGENOM" id="CLU_056714_0_0_5"/>
<dbReference type="OrthoDB" id="9804152at2"/>
<dbReference type="Proteomes" id="UP000018922">
    <property type="component" value="Chromosome I"/>
</dbReference>
<dbReference type="GO" id="GO:0110146">
    <property type="term" value="C:magnetosome membrane"/>
    <property type="evidence" value="ECO:0000314"/>
    <property type="project" value="UniProtKB"/>
</dbReference>
<dbReference type="GO" id="GO:0005886">
    <property type="term" value="C:plasma membrane"/>
    <property type="evidence" value="ECO:0007669"/>
    <property type="project" value="UniProtKB-SubCell"/>
</dbReference>
<dbReference type="Gene3D" id="1.20.1440.20">
    <property type="entry name" value="LemA-like domain"/>
    <property type="match status" value="1"/>
</dbReference>
<dbReference type="InterPro" id="IPR023353">
    <property type="entry name" value="LemA-like_dom_sf"/>
</dbReference>
<dbReference type="InterPro" id="IPR007156">
    <property type="entry name" value="MamQ_LemA"/>
</dbReference>
<dbReference type="NCBIfam" id="NF040966">
    <property type="entry name" value="MamQ"/>
    <property type="match status" value="1"/>
</dbReference>
<dbReference type="PANTHER" id="PTHR34478">
    <property type="entry name" value="PROTEIN LEMA"/>
    <property type="match status" value="1"/>
</dbReference>
<dbReference type="PANTHER" id="PTHR34478:SF1">
    <property type="entry name" value="PROTEIN LEMA"/>
    <property type="match status" value="1"/>
</dbReference>
<dbReference type="Pfam" id="PF04011">
    <property type="entry name" value="LemA"/>
    <property type="match status" value="1"/>
</dbReference>
<dbReference type="SUPFAM" id="SSF140478">
    <property type="entry name" value="LemA-like"/>
    <property type="match status" value="1"/>
</dbReference>
<reference key="1">
    <citation type="journal article" date="2001" name="Appl. Environ. Microbiol.">
        <title>A large gene cluster encoding several magnetosome proteins is conserved in different species of magnetotactic bacteria.</title>
        <authorList>
            <person name="Grunberg K."/>
            <person name="Wawer C."/>
            <person name="Tebo B.M."/>
            <person name="Schuler D."/>
        </authorList>
    </citation>
    <scope>NUCLEOTIDE SEQUENCE [GENOMIC DNA]</scope>
    <source>
        <strain>DSM 6361 / JCM 21280 / NBRC 15271 / MSR-1</strain>
    </source>
</reference>
<reference key="2">
    <citation type="journal article" date="2003" name="J. Bacteriol.">
        <title>Characterization of a spontaneous nonmagnetic mutant of Magnetospirillum gryphiswaldense reveals a large deletion comprising a putative magnetosome island.</title>
        <authorList>
            <person name="Schuebbe S."/>
            <person name="Kube M."/>
            <person name="Scheffel A."/>
            <person name="Wawer C."/>
            <person name="Heyen U."/>
            <person name="Meyerdierks A."/>
            <person name="Madkour M.H."/>
            <person name="Mayer F."/>
            <person name="Reinhardt R."/>
            <person name="Schueler D."/>
        </authorList>
    </citation>
    <scope>NUCLEOTIDE SEQUENCE [GENOMIC DNA]</scope>
    <scope>PROBABLE OPERON</scope>
    <scope>DISRUPTION PHENOTYPE</scope>
    <source>
        <strain>DSM 6361 / JCM 21280 / NBRC 15271 / MSR-1</strain>
    </source>
</reference>
<reference key="3">
    <citation type="journal article" date="2005" name="J. Bacteriol.">
        <title>A hypervariable 130-kilobase genomic region of Magnetospirillum gryphiswaldense comprises a magnetosome island which undergoes frequent rearrangements during stationary growth.</title>
        <authorList>
            <person name="Ullrich S."/>
            <person name="Kube M."/>
            <person name="Schuebbe S."/>
            <person name="Reinhardt R."/>
            <person name="Schueler D."/>
        </authorList>
    </citation>
    <scope>NUCLEOTIDE SEQUENCE [GENOMIC DNA]</scope>
    <source>
        <strain>DSM 6361 / JCM 21280 / NBRC 15271 / MSR-1</strain>
    </source>
</reference>
<reference key="4">
    <citation type="journal article" date="2007" name="J. Bacteriol.">
        <title>Comparative genome analysis of four magnetotactic bacteria reveals a complex set of group-specific genes implicated in magnetosome biomineralization and function.</title>
        <authorList>
            <person name="Richter M."/>
            <person name="Kube M."/>
            <person name="Bazylinski D.A."/>
            <person name="Lombardot T."/>
            <person name="Gloeckner F.O."/>
            <person name="Reinhardt R."/>
            <person name="Schueler D."/>
        </authorList>
    </citation>
    <scope>NUCLEOTIDE SEQUENCE [LARGE SCALE GENOMIC DNA]</scope>
    <source>
        <strain>DSM 6361 / JCM 21280 / NBRC 15271 / MSR-1</strain>
    </source>
</reference>
<reference key="5">
    <citation type="journal article" date="2014" name="Genome Announc.">
        <title>Complete genome sequence of Magnetospirillum gryphiswaldense MSR-1.</title>
        <authorList>
            <person name="Wang X."/>
            <person name="Wang Q."/>
            <person name="Zhang W."/>
            <person name="Wang Y."/>
            <person name="Li L."/>
            <person name="Wen T."/>
            <person name="Zhang T."/>
            <person name="Zhang Y."/>
            <person name="Xu J."/>
            <person name="Hu J."/>
            <person name="Li S."/>
            <person name="Liu L."/>
            <person name="Liu J."/>
            <person name="Jiang W."/>
            <person name="Tian J."/>
            <person name="Li Y."/>
            <person name="Schuler D."/>
            <person name="Wang L."/>
            <person name="Li J."/>
        </authorList>
    </citation>
    <scope>NUCLEOTIDE SEQUENCE [LARGE SCALE GENOMIC DNA]</scope>
    <source>
        <strain>DSM 6361 / JCM 21280 / NBRC 15271 / MSR-1</strain>
    </source>
</reference>
<reference key="6">
    <citation type="journal article" date="2004" name="Appl. Environ. Microbiol.">
        <title>Biochemical and proteomic analysis of the magnetosome membrane in Magnetospirillum gryphiswaldense.</title>
        <authorList>
            <person name="Gruenberg K."/>
            <person name="Mueller E.C."/>
            <person name="Otto A."/>
            <person name="Reszka R."/>
            <person name="Linder D."/>
            <person name="Kube M."/>
            <person name="Reinhardt R."/>
            <person name="Schueler D."/>
        </authorList>
    </citation>
    <scope>SUBCELLULAR LOCATION</scope>
    <scope>IDENTIFICATION BY MASS SPECTROMETRY</scope>
    <source>
        <strain>DSM 6361 / JCM 21280 / NBRC 15271 / MSR-1</strain>
    </source>
</reference>
<reference key="7">
    <citation type="journal article" date="2011" name="PLoS ONE">
        <title>Functional analysis of the magnetosome island in Magnetospirillum gryphiswaldense: the mamAB operon is sufficient for magnetite biomineralization.</title>
        <authorList>
            <person name="Lohsse A."/>
            <person name="Ullrich S."/>
            <person name="Katzmann E."/>
            <person name="Borg S."/>
            <person name="Wanner G."/>
            <person name="Richter M."/>
            <person name="Voigt B."/>
            <person name="Schweder T."/>
            <person name="Schueler D."/>
        </authorList>
    </citation>
    <scope>MINIMAL MAGNETOSOME ISLAND</scope>
    <source>
        <strain>DSM 6361 / JCM 21280 / NBRC 15271 / MSR-1</strain>
    </source>
</reference>
<reference key="8">
    <citation type="journal article" date="2014" name="J. Bacteriol.">
        <title>Genetic dissection of the mamAB and mms6 operons reveals a gene set essential for magnetosome biogenesis in Magnetospirillum gryphiswaldense.</title>
        <authorList>
            <person name="Lohsse A."/>
            <person name="Borg S."/>
            <person name="Raschdorf O."/>
            <person name="Kolinko I."/>
            <person name="Tompa E."/>
            <person name="Posfai M."/>
            <person name="Faivre D."/>
            <person name="Baumgartner J."/>
            <person name="Schueler D."/>
        </authorList>
    </citation>
    <scope>DISRUPTION PHENOTYPE</scope>
    <source>
        <strain>DSM 6361 / JCM 21280 / NBRC 15271 / MSR-1</strain>
    </source>
</reference>
<reference key="9">
    <citation type="journal article" date="2016" name="PLoS Genet.">
        <title>Genetic and Ultrastructural Analysis Reveals the Key Players and Initial Steps of Bacterial Magnetosome Membrane Biogenesis.</title>
        <authorList>
            <person name="Raschdorf O."/>
            <person name="Forstner Y."/>
            <person name="Kolinko I."/>
            <person name="Uebe R."/>
            <person name="Plitzko J.M."/>
            <person name="Schueler D."/>
        </authorList>
    </citation>
    <scope>FUNCTION</scope>
    <scope>MINIMAL VESICLE FORMATION GENES</scope>
    <scope>SUBCELLULAR LOCATION</scope>
    <scope>DISRUPTION PHENOTYPE</scope>
    <scope>PUTATIVE TOPOLOGY</scope>
    <scope>MUTAGENESIS OF GLU-111; GLU-179; TYR-181 AND 241-TYR-PHE-242</scope>
    <source>
        <strain>DSM 6361 / JCM 21280 / NBRC 15271 / MSR-1</strain>
    </source>
</reference>
<gene>
    <name evidence="7" type="primary">mamQ</name>
    <name type="ordered locus">MGMSRv2__2370</name>
    <name type="ORF">mgI496</name>
    <name type="ORF">MGR_4100</name>
</gene>
<feature type="chain" id="PRO_0000447750" description="Magnetosome protein MamQ">
    <location>
        <begin position="1"/>
        <end position="272"/>
    </location>
</feature>
<feature type="topological domain" description="Cytoplasmic" evidence="8">
    <location>
        <begin position="1"/>
        <end position="46"/>
    </location>
</feature>
<feature type="transmembrane region" description="Helical" evidence="1">
    <location>
        <begin position="47"/>
        <end position="67"/>
    </location>
</feature>
<feature type="topological domain" description="Lumenal" evidence="11">
    <location>
        <begin position="68"/>
        <end position="272"/>
    </location>
</feature>
<feature type="mutagenesis site" description="Does not restore magnetic response." evidence="6">
    <original>E</original>
    <variation>A</variation>
    <location>
        <position position="111"/>
    </location>
</feature>
<feature type="mutagenesis site" description="Does not restore magnetic response." evidence="6">
    <original>E</original>
    <variation>A</variation>
    <location>
        <position position="179"/>
    </location>
</feature>
<feature type="mutagenesis site" description="Does not restore magnetic response." evidence="6">
    <original>Y</original>
    <variation>A</variation>
    <location>
        <position position="181"/>
    </location>
</feature>
<feature type="mutagenesis site" description="Does not restore magnetic response." evidence="6">
    <original>YF</original>
    <variation>AA</variation>
    <location>
        <begin position="241"/>
        <end position="242"/>
    </location>
</feature>
<accession>Q93DY8</accession>
<accession>V6F230</accession>
<name>MAMQ_MAGGM</name>
<proteinExistence type="evidence at protein level"/>
<evidence type="ECO:0000255" key="1"/>
<evidence type="ECO:0000269" key="2">
    <source>
    </source>
</evidence>
<evidence type="ECO:0000269" key="3">
    <source>
    </source>
</evidence>
<evidence type="ECO:0000269" key="4">
    <source>
    </source>
</evidence>
<evidence type="ECO:0000269" key="5">
    <source>
    </source>
</evidence>
<evidence type="ECO:0000269" key="6">
    <source>
    </source>
</evidence>
<evidence type="ECO:0000303" key="7">
    <source>
    </source>
</evidence>
<evidence type="ECO:0000305" key="8"/>
<evidence type="ECO:0000305" key="9">
    <source>
    </source>
</evidence>
<evidence type="ECO:0000305" key="10">
    <source>
    </source>
</evidence>
<evidence type="ECO:0000305" key="11">
    <source>
    </source>
</evidence>